<gene>
    <name type="ordered locus">Mboo_0791</name>
</gene>
<keyword id="KW-1003">Cell membrane</keyword>
<keyword id="KW-0472">Membrane</keyword>
<keyword id="KW-1185">Reference proteome</keyword>
<keyword id="KW-0812">Transmembrane</keyword>
<keyword id="KW-1133">Transmembrane helix</keyword>
<sequence>MQFNPGPPAGFHAPPAKQKACTVTFFLFTPDILNYIVLPVLIFLAQIANVCMETLRIVFLSKGMKYLAPVIAFFEIIIWLLAIVGVLNNLSNIAYFLAYAFGFALGTYVGLVIEEKLSIGMVIMRIITTDGSGDGITEYLQQENYGTTCLDAKGARGGVKMIISLVNRDDVPRITRHIEETNPGAFFSIEDVRYVNQGVFRPKKQNPFTGFIHTLARPRKRV</sequence>
<name>Y791_METB6</name>
<feature type="chain" id="PRO_0000315259" description="UPF0316 protein Mboo_0791">
    <location>
        <begin position="1"/>
        <end position="222"/>
    </location>
</feature>
<feature type="transmembrane region" description="Helical" evidence="1">
    <location>
        <begin position="25"/>
        <end position="45"/>
    </location>
</feature>
<feature type="transmembrane region" description="Helical" evidence="1">
    <location>
        <begin position="67"/>
        <end position="87"/>
    </location>
</feature>
<feature type="transmembrane region" description="Helical" evidence="1">
    <location>
        <begin position="93"/>
        <end position="113"/>
    </location>
</feature>
<evidence type="ECO:0000255" key="1">
    <source>
        <dbReference type="HAMAP-Rule" id="MF_01515"/>
    </source>
</evidence>
<organism>
    <name type="scientific">Methanoregula boonei (strain DSM 21154 / JCM 14090 / 6A8)</name>
    <dbReference type="NCBI Taxonomy" id="456442"/>
    <lineage>
        <taxon>Archaea</taxon>
        <taxon>Methanobacteriati</taxon>
        <taxon>Methanobacteriota</taxon>
        <taxon>Stenosarchaea group</taxon>
        <taxon>Methanomicrobia</taxon>
        <taxon>Methanomicrobiales</taxon>
        <taxon>Methanoregulaceae</taxon>
        <taxon>Methanoregula</taxon>
    </lineage>
</organism>
<reference key="1">
    <citation type="journal article" date="2015" name="Microbiology">
        <title>Genome of Methanoregula boonei 6A8 reveals adaptations to oligotrophic peatland environments.</title>
        <authorList>
            <person name="Braeuer S."/>
            <person name="Cadillo-Quiroz H."/>
            <person name="Kyrpides N."/>
            <person name="Woyke T."/>
            <person name="Goodwin L."/>
            <person name="Detter C."/>
            <person name="Podell S."/>
            <person name="Yavitt J.B."/>
            <person name="Zinder S.H."/>
        </authorList>
    </citation>
    <scope>NUCLEOTIDE SEQUENCE [LARGE SCALE GENOMIC DNA]</scope>
    <source>
        <strain>DSM 21154 / JCM 14090 / 6A8</strain>
    </source>
</reference>
<proteinExistence type="inferred from homology"/>
<accession>A7I6E8</accession>
<dbReference type="EMBL" id="CP000780">
    <property type="protein sequence ID" value="ABS55309.1"/>
    <property type="molecule type" value="Genomic_DNA"/>
</dbReference>
<dbReference type="SMR" id="A7I6E8"/>
<dbReference type="STRING" id="456442.Mboo_0791"/>
<dbReference type="TCDB" id="2.A.115.1.7">
    <property type="family name" value="the novobiocin exporter (nbce) family"/>
</dbReference>
<dbReference type="KEGG" id="mbn:Mboo_0791"/>
<dbReference type="eggNOG" id="arCOG06902">
    <property type="taxonomic scope" value="Archaea"/>
</dbReference>
<dbReference type="HOGENOM" id="CLU_106166_0_0_2"/>
<dbReference type="OrthoDB" id="146491at2157"/>
<dbReference type="Proteomes" id="UP000002408">
    <property type="component" value="Chromosome"/>
</dbReference>
<dbReference type="GO" id="GO:0005886">
    <property type="term" value="C:plasma membrane"/>
    <property type="evidence" value="ECO:0007669"/>
    <property type="project" value="UniProtKB-SubCell"/>
</dbReference>
<dbReference type="CDD" id="cd16381">
    <property type="entry name" value="YitT_C_like_1"/>
    <property type="match status" value="1"/>
</dbReference>
<dbReference type="HAMAP" id="MF_01515">
    <property type="entry name" value="UPF0316"/>
    <property type="match status" value="1"/>
</dbReference>
<dbReference type="InterPro" id="IPR019264">
    <property type="entry name" value="DUF2179"/>
</dbReference>
<dbReference type="InterPro" id="IPR044035">
    <property type="entry name" value="DUF5698"/>
</dbReference>
<dbReference type="InterPro" id="IPR022930">
    <property type="entry name" value="UPF0316"/>
</dbReference>
<dbReference type="NCBIfam" id="NF003191">
    <property type="entry name" value="PRK04164.1-2"/>
    <property type="match status" value="1"/>
</dbReference>
<dbReference type="PANTHER" id="PTHR40060">
    <property type="entry name" value="UPF0316 PROTEIN YEBE"/>
    <property type="match status" value="1"/>
</dbReference>
<dbReference type="PANTHER" id="PTHR40060:SF1">
    <property type="entry name" value="UPF0316 PROTEIN YEBE"/>
    <property type="match status" value="1"/>
</dbReference>
<dbReference type="Pfam" id="PF10035">
    <property type="entry name" value="DUF2179"/>
    <property type="match status" value="1"/>
</dbReference>
<dbReference type="Pfam" id="PF18955">
    <property type="entry name" value="DUF5698"/>
    <property type="match status" value="1"/>
</dbReference>
<protein>
    <recommendedName>
        <fullName evidence="1">UPF0316 protein Mboo_0791</fullName>
    </recommendedName>
</protein>
<comment type="subcellular location">
    <subcellularLocation>
        <location evidence="1">Cell membrane</location>
        <topology evidence="1">Multi-pass membrane protein</topology>
    </subcellularLocation>
</comment>
<comment type="similarity">
    <text evidence="1">Belongs to the UPF0316 family.</text>
</comment>